<accession>P0C559</accession>
<accession>P48355</accession>
<accession>Q59555</accession>
<feature type="initiator methionine" description="Removed" evidence="1">
    <location>
        <position position="1"/>
    </location>
</feature>
<feature type="chain" id="PRO_0000145324" description="DNA gyrase subunit B">
    <location>
        <begin position="2"/>
        <end position="675"/>
    </location>
</feature>
<feature type="domain" description="Toprim" evidence="2">
    <location>
        <begin position="453"/>
        <end position="567"/>
    </location>
</feature>
<feature type="binding site" evidence="2">
    <location>
        <position position="459"/>
    </location>
    <ligand>
        <name>Mg(2+)</name>
        <dbReference type="ChEBI" id="CHEBI:18420"/>
        <label>1</label>
        <note>catalytic</note>
    </ligand>
</feature>
<feature type="binding site" evidence="2">
    <location>
        <position position="532"/>
    </location>
    <ligand>
        <name>Mg(2+)</name>
        <dbReference type="ChEBI" id="CHEBI:18420"/>
        <label>1</label>
        <note>catalytic</note>
    </ligand>
</feature>
<feature type="binding site" evidence="2">
    <location>
        <position position="532"/>
    </location>
    <ligand>
        <name>Mg(2+)</name>
        <dbReference type="ChEBI" id="CHEBI:18420"/>
        <label>2</label>
    </ligand>
</feature>
<feature type="binding site" evidence="2">
    <location>
        <position position="534"/>
    </location>
    <ligand>
        <name>Mg(2+)</name>
        <dbReference type="ChEBI" id="CHEBI:18420"/>
        <label>2</label>
    </ligand>
</feature>
<feature type="site" description="Interaction with DNA" evidence="2">
    <location>
        <position position="484"/>
    </location>
</feature>
<feature type="site" description="Interaction with DNA" evidence="2">
    <location>
        <position position="487"/>
    </location>
</feature>
<feature type="sequence conflict" description="In Ref. 1; CAA58884." evidence="5" ref="1">
    <original>G</original>
    <variation>R</variation>
    <location>
        <position position="162"/>
    </location>
</feature>
<feature type="helix" evidence="7">
    <location>
        <begin position="24"/>
        <end position="28"/>
    </location>
</feature>
<feature type="helix" evidence="7">
    <location>
        <begin position="31"/>
        <end position="34"/>
    </location>
</feature>
<feature type="helix" evidence="7">
    <location>
        <begin position="39"/>
        <end position="58"/>
    </location>
</feature>
<feature type="strand" evidence="7">
    <location>
        <begin position="64"/>
        <end position="69"/>
    </location>
</feature>
<feature type="strand" evidence="7">
    <location>
        <begin position="73"/>
        <end position="79"/>
    </location>
</feature>
<feature type="strand" evidence="7">
    <location>
        <begin position="90"/>
        <end position="94"/>
    </location>
</feature>
<feature type="helix" evidence="7">
    <location>
        <begin position="95"/>
        <end position="101"/>
    </location>
</feature>
<feature type="helix" evidence="7">
    <location>
        <begin position="125"/>
        <end position="130"/>
    </location>
</feature>
<feature type="strand" evidence="7">
    <location>
        <begin position="132"/>
        <end position="141"/>
    </location>
</feature>
<feature type="strand" evidence="7">
    <location>
        <begin position="144"/>
        <end position="151"/>
    </location>
</feature>
<feature type="strand" evidence="7">
    <location>
        <begin position="159"/>
        <end position="163"/>
    </location>
</feature>
<feature type="strand" evidence="7">
    <location>
        <begin position="168"/>
        <end position="175"/>
    </location>
</feature>
<feature type="turn" evidence="7">
    <location>
        <begin position="177"/>
        <end position="179"/>
    </location>
</feature>
<feature type="helix" evidence="7">
    <location>
        <begin position="187"/>
        <end position="200"/>
    </location>
</feature>
<feature type="strand" evidence="7">
    <location>
        <begin position="205"/>
        <end position="210"/>
    </location>
</feature>
<feature type="strand" evidence="7">
    <location>
        <begin position="247"/>
        <end position="251"/>
    </location>
</feature>
<organism>
    <name type="scientific">Mycolicibacterium smegmatis</name>
    <name type="common">Mycobacterium smegmatis</name>
    <dbReference type="NCBI Taxonomy" id="1772"/>
    <lineage>
        <taxon>Bacteria</taxon>
        <taxon>Bacillati</taxon>
        <taxon>Actinomycetota</taxon>
        <taxon>Actinomycetes</taxon>
        <taxon>Mycobacteriales</taxon>
        <taxon>Mycobacteriaceae</taxon>
        <taxon>Mycolicibacterium</taxon>
    </lineage>
</organism>
<sequence length="675" mass="74512">MAAQKNNAPKEYGADSITILEGLEAVRKRPGMYIGSTGERGLHHLIWEVVDNAVDEAMAGFATRVDVKIHADGSVEVRDDGRGIPVEMHATGMPTIDVVMTQLHAGGKFDGETYAVSGGLHGVGVSVVNALSTRLEATVLRDGYEWFQYYDRSVPGKLKQGGETKETGTTIRFWADPEIFETTDYNFETVARRLQEMAFLNKGLTIELTDERVTAEEVVDDVVKDTAEAPKTADEKAAEATGPSKVKHRVFHYPGGLVDYVKHINRTKTPIQQSIIDFDGKGPGHEVEIAMQWNAGYSESVHTFANTINTHEGGTHEEGFRAALTSVVNRYAKDKKLLKDKDPNLTGDDIREGLAAVISVKVAEPQFEGQTKTKLGNTEVKSFVQKICNEQLQHWFEANPAEAKTVVNKAVSSAQARIAARKARELVRRKSATDIGGLPGKLADCRSTDPSKSELYVVEGDSAGGSAKSGRDSMFQAILPLRGKIINVEKARIDRVLKNTEVQSIITALGTGIHDEFDISKLRYHKIVLMADADVDGQHISTLLLTLLFRFMKPLVENGHIFLAQPPLYKLKWQRSEPEFAYSDRERDGLLEAGRAAGKKINVDDGIQRYKGLGEMDAKELWETTMDPSVRVLRQVTLDDAAAADELFSILMGEDVEARRSFITRNAKDVRFLDV</sequence>
<gene>
    <name evidence="2" type="primary">gyrB</name>
</gene>
<name>GYRB_MYCSM</name>
<evidence type="ECO:0000250" key="1"/>
<evidence type="ECO:0000255" key="2">
    <source>
        <dbReference type="HAMAP-Rule" id="MF_01898"/>
    </source>
</evidence>
<evidence type="ECO:0000269" key="3">
    <source>
    </source>
</evidence>
<evidence type="ECO:0000269" key="4">
    <source>
    </source>
</evidence>
<evidence type="ECO:0000305" key="5"/>
<evidence type="ECO:0000305" key="6">
    <source>
    </source>
</evidence>
<evidence type="ECO:0007829" key="7">
    <source>
        <dbReference type="PDB" id="4BAE"/>
    </source>
</evidence>
<protein>
    <recommendedName>
        <fullName evidence="2">DNA gyrase subunit B</fullName>
        <ecNumber evidence="2 3">5.6.2.2</ecNumber>
    </recommendedName>
</protein>
<keyword id="KW-0002">3D-structure</keyword>
<keyword id="KW-0067">ATP-binding</keyword>
<keyword id="KW-0963">Cytoplasm</keyword>
<keyword id="KW-0238">DNA-binding</keyword>
<keyword id="KW-0413">Isomerase</keyword>
<keyword id="KW-0460">Magnesium</keyword>
<keyword id="KW-0479">Metal-binding</keyword>
<keyword id="KW-0547">Nucleotide-binding</keyword>
<keyword id="KW-0799">Topoisomerase</keyword>
<dbReference type="EC" id="5.6.2.2" evidence="2 3"/>
<dbReference type="EMBL" id="X92503">
    <property type="protein sequence ID" value="CAA63253.1"/>
    <property type="status" value="ALT_INIT"/>
    <property type="molecule type" value="Genomic_DNA"/>
</dbReference>
<dbReference type="EMBL" id="X84077">
    <property type="protein sequence ID" value="CAA58884.1"/>
    <property type="molecule type" value="Genomic_DNA"/>
</dbReference>
<dbReference type="RefSeq" id="WP_003891333.1">
    <property type="nucleotide sequence ID" value="NZ_UGQO01000001.1"/>
</dbReference>
<dbReference type="PDB" id="4BAE">
    <property type="method" value="X-ray"/>
    <property type="resolution" value="2.35 A"/>
    <property type="chains" value="A/B/C/D=19-212"/>
</dbReference>
<dbReference type="PDB" id="6Y8O">
    <property type="method" value="X-ray"/>
    <property type="resolution" value="1.60 A"/>
    <property type="chains" value="A/B=9-218"/>
</dbReference>
<dbReference type="PDBsum" id="4BAE"/>
<dbReference type="PDBsum" id="6Y8O"/>
<dbReference type="SMR" id="P0C559"/>
<dbReference type="BindingDB" id="P0C559"/>
<dbReference type="ChEMBL" id="CHEMBL3085613"/>
<dbReference type="DrugCentral" id="P0C559"/>
<dbReference type="GeneID" id="93454932"/>
<dbReference type="OMA" id="QLWSTTM"/>
<dbReference type="EvolutionaryTrace" id="P0C559"/>
<dbReference type="GO" id="GO:0005694">
    <property type="term" value="C:chromosome"/>
    <property type="evidence" value="ECO:0007669"/>
    <property type="project" value="InterPro"/>
</dbReference>
<dbReference type="GO" id="GO:0005737">
    <property type="term" value="C:cytoplasm"/>
    <property type="evidence" value="ECO:0007669"/>
    <property type="project" value="UniProtKB-SubCell"/>
</dbReference>
<dbReference type="GO" id="GO:0005524">
    <property type="term" value="F:ATP binding"/>
    <property type="evidence" value="ECO:0007669"/>
    <property type="project" value="UniProtKB-UniRule"/>
</dbReference>
<dbReference type="GO" id="GO:0003677">
    <property type="term" value="F:DNA binding"/>
    <property type="evidence" value="ECO:0007669"/>
    <property type="project" value="UniProtKB-KW"/>
</dbReference>
<dbReference type="GO" id="GO:0034335">
    <property type="term" value="F:DNA negative supercoiling activity"/>
    <property type="evidence" value="ECO:0000314"/>
    <property type="project" value="UniProtKB"/>
</dbReference>
<dbReference type="GO" id="GO:0046872">
    <property type="term" value="F:metal ion binding"/>
    <property type="evidence" value="ECO:0007669"/>
    <property type="project" value="UniProtKB-KW"/>
</dbReference>
<dbReference type="GO" id="GO:0006265">
    <property type="term" value="P:DNA topological change"/>
    <property type="evidence" value="ECO:0007669"/>
    <property type="project" value="UniProtKB-UniRule"/>
</dbReference>
<dbReference type="GO" id="GO:0006261">
    <property type="term" value="P:DNA-templated DNA replication"/>
    <property type="evidence" value="ECO:0007669"/>
    <property type="project" value="UniProtKB-UniRule"/>
</dbReference>
<dbReference type="CDD" id="cd16928">
    <property type="entry name" value="HATPase_GyrB-like"/>
    <property type="match status" value="1"/>
</dbReference>
<dbReference type="CDD" id="cd00822">
    <property type="entry name" value="TopoII_Trans_DNA_gyrase"/>
    <property type="match status" value="1"/>
</dbReference>
<dbReference type="FunFam" id="3.30.230.10:FF:000005">
    <property type="entry name" value="DNA gyrase subunit B"/>
    <property type="match status" value="1"/>
</dbReference>
<dbReference type="FunFam" id="3.30.565.10:FF:000002">
    <property type="entry name" value="DNA gyrase subunit B"/>
    <property type="match status" value="1"/>
</dbReference>
<dbReference type="FunFam" id="3.40.50.670:FF:000002">
    <property type="entry name" value="DNA gyrase subunit B"/>
    <property type="match status" value="1"/>
</dbReference>
<dbReference type="Gene3D" id="3.30.230.10">
    <property type="match status" value="1"/>
</dbReference>
<dbReference type="Gene3D" id="3.40.50.670">
    <property type="match status" value="1"/>
</dbReference>
<dbReference type="Gene3D" id="3.30.565.10">
    <property type="entry name" value="Histidine kinase-like ATPase, C-terminal domain"/>
    <property type="match status" value="1"/>
</dbReference>
<dbReference type="HAMAP" id="MF_01898">
    <property type="entry name" value="GyrB"/>
    <property type="match status" value="1"/>
</dbReference>
<dbReference type="InterPro" id="IPR002288">
    <property type="entry name" value="DNA_gyrase_B_C"/>
</dbReference>
<dbReference type="InterPro" id="IPR011557">
    <property type="entry name" value="GyrB"/>
</dbReference>
<dbReference type="InterPro" id="IPR036890">
    <property type="entry name" value="HATPase_C_sf"/>
</dbReference>
<dbReference type="InterPro" id="IPR020568">
    <property type="entry name" value="Ribosomal_Su5_D2-typ_SF"/>
</dbReference>
<dbReference type="InterPro" id="IPR014721">
    <property type="entry name" value="Ribsml_uS5_D2-typ_fold_subgr"/>
</dbReference>
<dbReference type="InterPro" id="IPR001241">
    <property type="entry name" value="Topo_IIA"/>
</dbReference>
<dbReference type="InterPro" id="IPR013760">
    <property type="entry name" value="Topo_IIA-like_dom_sf"/>
</dbReference>
<dbReference type="InterPro" id="IPR000565">
    <property type="entry name" value="Topo_IIA_B"/>
</dbReference>
<dbReference type="InterPro" id="IPR013759">
    <property type="entry name" value="Topo_IIA_B_C"/>
</dbReference>
<dbReference type="InterPro" id="IPR013506">
    <property type="entry name" value="Topo_IIA_bsu_dom2"/>
</dbReference>
<dbReference type="InterPro" id="IPR018522">
    <property type="entry name" value="TopoIIA_CS"/>
</dbReference>
<dbReference type="InterPro" id="IPR006171">
    <property type="entry name" value="TOPRIM_dom"/>
</dbReference>
<dbReference type="NCBIfam" id="TIGR01059">
    <property type="entry name" value="gyrB"/>
    <property type="match status" value="1"/>
</dbReference>
<dbReference type="NCBIfam" id="NF004189">
    <property type="entry name" value="PRK05644.1"/>
    <property type="match status" value="1"/>
</dbReference>
<dbReference type="PANTHER" id="PTHR45866:SF1">
    <property type="entry name" value="DNA GYRASE SUBUNIT B, MITOCHONDRIAL"/>
    <property type="match status" value="1"/>
</dbReference>
<dbReference type="PANTHER" id="PTHR45866">
    <property type="entry name" value="DNA GYRASE/TOPOISOMERASE SUBUNIT B"/>
    <property type="match status" value="1"/>
</dbReference>
<dbReference type="Pfam" id="PF00204">
    <property type="entry name" value="DNA_gyraseB"/>
    <property type="match status" value="1"/>
</dbReference>
<dbReference type="Pfam" id="PF00986">
    <property type="entry name" value="DNA_gyraseB_C"/>
    <property type="match status" value="1"/>
</dbReference>
<dbReference type="Pfam" id="PF02518">
    <property type="entry name" value="HATPase_c"/>
    <property type="match status" value="1"/>
</dbReference>
<dbReference type="Pfam" id="PF01751">
    <property type="entry name" value="Toprim"/>
    <property type="match status" value="1"/>
</dbReference>
<dbReference type="PRINTS" id="PR01159">
    <property type="entry name" value="DNAGYRASEB"/>
</dbReference>
<dbReference type="PRINTS" id="PR00418">
    <property type="entry name" value="TPI2FAMILY"/>
</dbReference>
<dbReference type="SMART" id="SM00387">
    <property type="entry name" value="HATPase_c"/>
    <property type="match status" value="1"/>
</dbReference>
<dbReference type="SMART" id="SM00433">
    <property type="entry name" value="TOP2c"/>
    <property type="match status" value="1"/>
</dbReference>
<dbReference type="SUPFAM" id="SSF55874">
    <property type="entry name" value="ATPase domain of HSP90 chaperone/DNA topoisomerase II/histidine kinase"/>
    <property type="match status" value="1"/>
</dbReference>
<dbReference type="SUPFAM" id="SSF54211">
    <property type="entry name" value="Ribosomal protein S5 domain 2-like"/>
    <property type="match status" value="1"/>
</dbReference>
<dbReference type="SUPFAM" id="SSF56719">
    <property type="entry name" value="Type II DNA topoisomerase"/>
    <property type="match status" value="1"/>
</dbReference>
<dbReference type="PROSITE" id="PS00177">
    <property type="entry name" value="TOPOISOMERASE_II"/>
    <property type="match status" value="1"/>
</dbReference>
<dbReference type="PROSITE" id="PS50880">
    <property type="entry name" value="TOPRIM"/>
    <property type="match status" value="1"/>
</dbReference>
<reference key="1">
    <citation type="journal article" date="1995" name="Microbiology">
        <title>Mycobacterium smegmatis DNA gyrase: cloning and overexpression in Escherichia coli.</title>
        <authorList>
            <person name="Madhusudan K."/>
            <person name="Nagaraja V."/>
        </authorList>
    </citation>
    <scope>NUCLEOTIDE SEQUENCE [GENOMIC DNA]</scope>
    <scope>FUNCTION</scope>
    <scope>ACTIVITY REGULATION</scope>
    <scope>SUBUNIT</scope>
    <source>
        <strain>ATCC 27204 / DSM 43464 / SN2</strain>
    </source>
</reference>
<reference key="2">
    <citation type="journal article" date="1996" name="Mol. Microbiol.">
        <title>Organization of the origins of replication of the chromosomes of Mycobacterium smegmatis, Mycobacterium leprae and Mycobacterium tuberculosis and isolation of a functional origin from M. smegmatis.</title>
        <authorList>
            <person name="Salazar L."/>
            <person name="Fsihi H."/>
            <person name="De Rossi E."/>
            <person name="Riccardi G."/>
            <person name="Rios C."/>
            <person name="Cole S.T."/>
            <person name="Takiff H.E."/>
        </authorList>
    </citation>
    <scope>NUCLEOTIDE SEQUENCE [GENOMIC DNA]</scope>
    <source>
        <strain>ATCC 607 / DSM 43465 / JCM 20379 / NBRC 3207 / NRRL B-692</strain>
    </source>
</reference>
<reference key="3">
    <citation type="journal article" date="2002" name="Nucleic Acids Res.">
        <title>Functional characterisation of mycobacterial DNA gyrase: an efficient decatenase.</title>
        <authorList>
            <person name="Manjunatha U.H."/>
            <person name="Dalal M."/>
            <person name="Chatterji M."/>
            <person name="Radha D.R."/>
            <person name="Visweswariah S.S."/>
            <person name="Nagaraja V."/>
        </authorList>
    </citation>
    <scope>FUNCTION</scope>
    <scope>CATALYTIC ACTIVITY</scope>
    <scope>COFACTOR</scope>
    <scope>ACTIVITY REGULATION</scope>
    <scope>SUBUNIT</scope>
    <scope>SUBCELLULAR LOCATION</scope>
    <scope>DNA-BINDING</scope>
    <source>
        <strain>ATCC 27204 / DSM 43464 / SN2</strain>
    </source>
</reference>
<comment type="function">
    <text evidence="3 4">Supercoils relaxed DNA in an ATP-dependent manner (PubMed:8574396). A type II topoisomerase that negatively supercoils closed circular double-stranded (ds) DNA in an ATP-dependent manner to modulate DNA topology and maintain chromosomes in an underwound state, also catalyzes the interconversion of other topological isomers of double-stranded DNA rings, including catenanes (PubMed:12000834). At comparable concentrations has a stronger decatenation activity than E.coli, which is inhibited by ciprofloxacin and novobiocin (PubMed:12000834). Cleaves dsDNA at the sequence 5'-AT/GGCC-3', leaving a 4 base overhang (PubMed:12000834). Relaxes negatively supercoiled DNA in an ATP-independent manner (PubMed:12000834).</text>
</comment>
<comment type="function">
    <text>Negative supercoiling favors strand separation, and DNA replication, transcription, recombination and repair, all of which involve strand separation. Type II topoisomerases break and join 2 DNA strands simultaneously in an ATP-dependent manner.</text>
</comment>
<comment type="catalytic activity">
    <reaction evidence="2 3">
        <text>ATP-dependent breakage, passage and rejoining of double-stranded DNA.</text>
        <dbReference type="EC" id="5.6.2.2"/>
    </reaction>
</comment>
<comment type="cofactor">
    <cofactor evidence="2 3">
        <name>Mg(2+)</name>
        <dbReference type="ChEBI" id="CHEBI:18420"/>
    </cofactor>
    <cofactor evidence="2">
        <name>Mn(2+)</name>
        <dbReference type="ChEBI" id="CHEBI:29035"/>
    </cofactor>
    <cofactor evidence="2">
        <name>Ca(2+)</name>
        <dbReference type="ChEBI" id="CHEBI:29108"/>
    </cofactor>
    <text evidence="2">Binds two Mg(2+) per subunit. The magnesium ions form salt bridges with both the protein and the DNA. Can also accept other divalent metal cations, such as Mn(2+) or Ca(2+).</text>
</comment>
<comment type="activity regulation">
    <text evidence="3 4">DNA supercoiling is inhibited by the coumarin antibiotic novobiocin (PubMed:8574396). Also inhibited by the fluoroquinolones ciprofloxacin and moxifloxacin (PubMed:12000834).</text>
</comment>
<comment type="subunit">
    <text evidence="2 3 6">Heterotetramer, composed of two GyrA and two GyrB chains (PubMed:12000834, PubMed:8574396). In the heterotetramer, GyrA contains the active site tyrosine that forms a transient covalent intermediate with DNA, while GyrB binds cofactors and catalyzes ATP hydrolysis.</text>
</comment>
<comment type="subcellular location">
    <subcellularLocation>
        <location evidence="2 3">Cytoplasm</location>
    </subcellularLocation>
</comment>
<comment type="miscellaneous">
    <text evidence="2">Few gyrases are as efficient as E.coli at forming negative supercoils. Not all organisms have 2 type II topoisomerases; in organisms with a single type II topoisomerase this enzyme also has to decatenate newly replicated chromosomes.</text>
</comment>
<comment type="similarity">
    <text evidence="2">Belongs to the type II topoisomerase GyrB family.</text>
</comment>
<comment type="sequence caution" evidence="5">
    <conflict type="erroneous initiation">
        <sequence resource="EMBL-CDS" id="CAA63253"/>
    </conflict>
    <text>Extended N-terminus.</text>
</comment>
<proteinExistence type="evidence at protein level"/>